<organism>
    <name type="scientific">Ralstonia nicotianae (strain ATCC BAA-1114 / GMI1000)</name>
    <name type="common">Ralstonia solanacearum</name>
    <dbReference type="NCBI Taxonomy" id="267608"/>
    <lineage>
        <taxon>Bacteria</taxon>
        <taxon>Pseudomonadati</taxon>
        <taxon>Pseudomonadota</taxon>
        <taxon>Betaproteobacteria</taxon>
        <taxon>Burkholderiales</taxon>
        <taxon>Burkholderiaceae</taxon>
        <taxon>Ralstonia</taxon>
        <taxon>Ralstonia solanacearum species complex</taxon>
    </lineage>
</organism>
<comment type="function">
    <text evidence="1">Binds as a heterodimer with protein bS6 to the central domain of the 16S rRNA, where it helps stabilize the platform of the 30S subunit.</text>
</comment>
<comment type="subunit">
    <text evidence="1">Part of the 30S ribosomal subunit. Forms a tight heterodimer with protein bS6.</text>
</comment>
<comment type="similarity">
    <text evidence="1">Belongs to the bacterial ribosomal protein bS18 family.</text>
</comment>
<name>RS18_RALN1</name>
<reference key="1">
    <citation type="journal article" date="2002" name="Nature">
        <title>Genome sequence of the plant pathogen Ralstonia solanacearum.</title>
        <authorList>
            <person name="Salanoubat M."/>
            <person name="Genin S."/>
            <person name="Artiguenave F."/>
            <person name="Gouzy J."/>
            <person name="Mangenot S."/>
            <person name="Arlat M."/>
            <person name="Billault A."/>
            <person name="Brottier P."/>
            <person name="Camus J.-C."/>
            <person name="Cattolico L."/>
            <person name="Chandler M."/>
            <person name="Choisne N."/>
            <person name="Claudel-Renard C."/>
            <person name="Cunnac S."/>
            <person name="Demange N."/>
            <person name="Gaspin C."/>
            <person name="Lavie M."/>
            <person name="Moisan A."/>
            <person name="Robert C."/>
            <person name="Saurin W."/>
            <person name="Schiex T."/>
            <person name="Siguier P."/>
            <person name="Thebault P."/>
            <person name="Whalen M."/>
            <person name="Wincker P."/>
            <person name="Levy M."/>
            <person name="Weissenbach J."/>
            <person name="Boucher C.A."/>
        </authorList>
    </citation>
    <scope>NUCLEOTIDE SEQUENCE [LARGE SCALE GENOMIC DNA]</scope>
    <source>
        <strain>ATCC BAA-1114 / GMI1000</strain>
    </source>
</reference>
<proteinExistence type="inferred from homology"/>
<dbReference type="EMBL" id="AL646052">
    <property type="protein sequence ID" value="CAD15011.1"/>
    <property type="molecule type" value="Genomic_DNA"/>
</dbReference>
<dbReference type="SMR" id="Q8XZT6"/>
<dbReference type="STRING" id="267608.RSc1309"/>
<dbReference type="EnsemblBacteria" id="CAD15011">
    <property type="protein sequence ID" value="CAD15011"/>
    <property type="gene ID" value="RSc1309"/>
</dbReference>
<dbReference type="KEGG" id="rso:RSc1309"/>
<dbReference type="eggNOG" id="COG0238">
    <property type="taxonomic scope" value="Bacteria"/>
</dbReference>
<dbReference type="HOGENOM" id="CLU_148710_0_3_4"/>
<dbReference type="Proteomes" id="UP000001436">
    <property type="component" value="Chromosome"/>
</dbReference>
<dbReference type="GO" id="GO:0022627">
    <property type="term" value="C:cytosolic small ribosomal subunit"/>
    <property type="evidence" value="ECO:0007669"/>
    <property type="project" value="TreeGrafter"/>
</dbReference>
<dbReference type="GO" id="GO:0070181">
    <property type="term" value="F:small ribosomal subunit rRNA binding"/>
    <property type="evidence" value="ECO:0007669"/>
    <property type="project" value="TreeGrafter"/>
</dbReference>
<dbReference type="GO" id="GO:0003735">
    <property type="term" value="F:structural constituent of ribosome"/>
    <property type="evidence" value="ECO:0007669"/>
    <property type="project" value="InterPro"/>
</dbReference>
<dbReference type="GO" id="GO:0006412">
    <property type="term" value="P:translation"/>
    <property type="evidence" value="ECO:0007669"/>
    <property type="project" value="UniProtKB-UniRule"/>
</dbReference>
<dbReference type="Gene3D" id="4.10.640.10">
    <property type="entry name" value="Ribosomal protein S18"/>
    <property type="match status" value="1"/>
</dbReference>
<dbReference type="HAMAP" id="MF_00270">
    <property type="entry name" value="Ribosomal_bS18"/>
    <property type="match status" value="1"/>
</dbReference>
<dbReference type="InterPro" id="IPR001648">
    <property type="entry name" value="Ribosomal_bS18"/>
</dbReference>
<dbReference type="InterPro" id="IPR018275">
    <property type="entry name" value="Ribosomal_bS18_CS"/>
</dbReference>
<dbReference type="InterPro" id="IPR036870">
    <property type="entry name" value="Ribosomal_bS18_sf"/>
</dbReference>
<dbReference type="NCBIfam" id="TIGR00165">
    <property type="entry name" value="S18"/>
    <property type="match status" value="1"/>
</dbReference>
<dbReference type="PANTHER" id="PTHR13479">
    <property type="entry name" value="30S RIBOSOMAL PROTEIN S18"/>
    <property type="match status" value="1"/>
</dbReference>
<dbReference type="PANTHER" id="PTHR13479:SF40">
    <property type="entry name" value="SMALL RIBOSOMAL SUBUNIT PROTEIN BS18M"/>
    <property type="match status" value="1"/>
</dbReference>
<dbReference type="Pfam" id="PF01084">
    <property type="entry name" value="Ribosomal_S18"/>
    <property type="match status" value="1"/>
</dbReference>
<dbReference type="PRINTS" id="PR00974">
    <property type="entry name" value="RIBOSOMALS18"/>
</dbReference>
<dbReference type="SUPFAM" id="SSF46911">
    <property type="entry name" value="Ribosomal protein S18"/>
    <property type="match status" value="1"/>
</dbReference>
<dbReference type="PROSITE" id="PS00057">
    <property type="entry name" value="RIBOSOMAL_S18"/>
    <property type="match status" value="1"/>
</dbReference>
<protein>
    <recommendedName>
        <fullName evidence="1">Small ribosomal subunit protein bS18</fullName>
    </recommendedName>
    <alternativeName>
        <fullName evidence="2">30S ribosomal protein S18</fullName>
    </alternativeName>
</protein>
<accession>Q8XZT6</accession>
<sequence length="92" mass="10969">MNKKQRDAKNKKRFQQQNPLFKRKKFCRFTVAGVEQIDYKDLDTLKDFIGENGKITPARLTGTRSHYQRQLDTAIKRARFLALMPYTDQHKH</sequence>
<feature type="chain" id="PRO_0000111212" description="Small ribosomal subunit protein bS18">
    <location>
        <begin position="1"/>
        <end position="92"/>
    </location>
</feature>
<keyword id="KW-1185">Reference proteome</keyword>
<keyword id="KW-0687">Ribonucleoprotein</keyword>
<keyword id="KW-0689">Ribosomal protein</keyword>
<keyword id="KW-0694">RNA-binding</keyword>
<keyword id="KW-0699">rRNA-binding</keyword>
<evidence type="ECO:0000255" key="1">
    <source>
        <dbReference type="HAMAP-Rule" id="MF_00270"/>
    </source>
</evidence>
<evidence type="ECO:0000305" key="2"/>
<gene>
    <name evidence="1" type="primary">rpsR</name>
    <name type="ordered locus">RSc1309</name>
    <name type="ORF">RS02831</name>
</gene>